<sequence>MPVITLPDGSQREFDKPVSIMEVAADIGAGLAKATVAGRIDGELVDACELIEHDARIEIVTPKDDDGVHIIRHSCAHLMGHAVKQMWPDAKMAIGPVIDNGFYYDIDVDHTFTQEDLEKIEKRMKELAKTEYAVVKKKASWKEARETFVERHEPYKIEILDEDIPTDATPGLYHHEEYIDMCRGPHVPNMKFCQHFKIMKMAGAYWRGDSDNKMLQRIYGTAWADKKQLKAYLQRLEEAEKRDHRKIAKAQDLFHWQEEAPGMVFWHHNGWTIFRELETYIREKMREYEYQEVKGPMMMDRVLWEKSGHWEKFSELMFTTSSENREYAVKPMNCPGHVQIFNQGLKSYRDLPLRMAEFGSCHRNEPSGALHGLMRVRGFTQDDAHIFCTEQQVQEEVAGCIKMVYETYKTFGFENIDVKLSTRPEKRLGDDATWDRSETALAQALKNNDIDFSYLPGEGAFYGPKIEFTLFDCLGRAWQCGTIQLDFALPGRLGATYVGEDNERHTPVMIHRAILGSLERFMGILIEEYAGHFPLWLSPTQVVLMNITDNQSDYVRKVVKTLNEKGIRASADLRNEKIGFKIREHTLKRVPYLLVVGDKEVEAGEVAVRTRGGEDLGKFPLEDFITRVEDEVRTRKID</sequence>
<feature type="chain" id="PRO_0000100991" description="Threonine--tRNA ligase">
    <location>
        <begin position="1"/>
        <end position="638"/>
    </location>
</feature>
<feature type="domain" description="TGS" evidence="2">
    <location>
        <begin position="1"/>
        <end position="61"/>
    </location>
</feature>
<feature type="region of interest" description="Catalytic" evidence="1">
    <location>
        <begin position="243"/>
        <end position="534"/>
    </location>
</feature>
<feature type="binding site" evidence="1">
    <location>
        <position position="334"/>
    </location>
    <ligand>
        <name>Zn(2+)</name>
        <dbReference type="ChEBI" id="CHEBI:29105"/>
    </ligand>
</feature>
<feature type="binding site" evidence="1">
    <location>
        <position position="385"/>
    </location>
    <ligand>
        <name>Zn(2+)</name>
        <dbReference type="ChEBI" id="CHEBI:29105"/>
    </ligand>
</feature>
<feature type="binding site" evidence="1">
    <location>
        <position position="511"/>
    </location>
    <ligand>
        <name>Zn(2+)</name>
        <dbReference type="ChEBI" id="CHEBI:29105"/>
    </ligand>
</feature>
<comment type="function">
    <text evidence="1">Catalyzes the attachment of threonine to tRNA(Thr) in a two-step reaction: L-threonine is first activated by ATP to form Thr-AMP and then transferred to the acceptor end of tRNA(Thr). Also edits incorrectly charged L-seryl-tRNA(Thr).</text>
</comment>
<comment type="catalytic activity">
    <reaction evidence="1">
        <text>tRNA(Thr) + L-threonine + ATP = L-threonyl-tRNA(Thr) + AMP + diphosphate + H(+)</text>
        <dbReference type="Rhea" id="RHEA:24624"/>
        <dbReference type="Rhea" id="RHEA-COMP:9670"/>
        <dbReference type="Rhea" id="RHEA-COMP:9704"/>
        <dbReference type="ChEBI" id="CHEBI:15378"/>
        <dbReference type="ChEBI" id="CHEBI:30616"/>
        <dbReference type="ChEBI" id="CHEBI:33019"/>
        <dbReference type="ChEBI" id="CHEBI:57926"/>
        <dbReference type="ChEBI" id="CHEBI:78442"/>
        <dbReference type="ChEBI" id="CHEBI:78534"/>
        <dbReference type="ChEBI" id="CHEBI:456215"/>
        <dbReference type="EC" id="6.1.1.3"/>
    </reaction>
</comment>
<comment type="cofactor">
    <cofactor evidence="1">
        <name>Zn(2+)</name>
        <dbReference type="ChEBI" id="CHEBI:29105"/>
    </cofactor>
    <text evidence="1">Binds 1 zinc ion per subunit.</text>
</comment>
<comment type="subunit">
    <text evidence="1">Homodimer.</text>
</comment>
<comment type="subcellular location">
    <subcellularLocation>
        <location evidence="1">Cytoplasm</location>
    </subcellularLocation>
</comment>
<comment type="similarity">
    <text evidence="1">Belongs to the class-II aminoacyl-tRNA synthetase family.</text>
</comment>
<protein>
    <recommendedName>
        <fullName evidence="1">Threonine--tRNA ligase</fullName>
        <ecNumber evidence="1">6.1.1.3</ecNumber>
    </recommendedName>
    <alternativeName>
        <fullName evidence="1">Threonyl-tRNA synthetase</fullName>
        <shortName evidence="1">ThrRS</shortName>
    </alternativeName>
</protein>
<dbReference type="EC" id="6.1.1.3" evidence="1"/>
<dbReference type="EMBL" id="AE017340">
    <property type="protein sequence ID" value="AAV82239.1"/>
    <property type="molecule type" value="Genomic_DNA"/>
</dbReference>
<dbReference type="RefSeq" id="WP_011234645.1">
    <property type="nucleotide sequence ID" value="NC_006512.1"/>
</dbReference>
<dbReference type="SMR" id="Q5QYN4"/>
<dbReference type="STRING" id="283942.IL1399"/>
<dbReference type="GeneID" id="41336575"/>
<dbReference type="KEGG" id="ilo:IL1399"/>
<dbReference type="eggNOG" id="COG0441">
    <property type="taxonomic scope" value="Bacteria"/>
</dbReference>
<dbReference type="HOGENOM" id="CLU_008554_0_1_6"/>
<dbReference type="OrthoDB" id="9802304at2"/>
<dbReference type="Proteomes" id="UP000001171">
    <property type="component" value="Chromosome"/>
</dbReference>
<dbReference type="GO" id="GO:0005829">
    <property type="term" value="C:cytosol"/>
    <property type="evidence" value="ECO:0007669"/>
    <property type="project" value="TreeGrafter"/>
</dbReference>
<dbReference type="GO" id="GO:0005524">
    <property type="term" value="F:ATP binding"/>
    <property type="evidence" value="ECO:0007669"/>
    <property type="project" value="UniProtKB-UniRule"/>
</dbReference>
<dbReference type="GO" id="GO:0046872">
    <property type="term" value="F:metal ion binding"/>
    <property type="evidence" value="ECO:0007669"/>
    <property type="project" value="UniProtKB-KW"/>
</dbReference>
<dbReference type="GO" id="GO:0004829">
    <property type="term" value="F:threonine-tRNA ligase activity"/>
    <property type="evidence" value="ECO:0007669"/>
    <property type="project" value="UniProtKB-UniRule"/>
</dbReference>
<dbReference type="GO" id="GO:0000049">
    <property type="term" value="F:tRNA binding"/>
    <property type="evidence" value="ECO:0007669"/>
    <property type="project" value="UniProtKB-KW"/>
</dbReference>
<dbReference type="GO" id="GO:0006435">
    <property type="term" value="P:threonyl-tRNA aminoacylation"/>
    <property type="evidence" value="ECO:0007669"/>
    <property type="project" value="UniProtKB-UniRule"/>
</dbReference>
<dbReference type="CDD" id="cd01667">
    <property type="entry name" value="TGS_ThrRS"/>
    <property type="match status" value="1"/>
</dbReference>
<dbReference type="CDD" id="cd00860">
    <property type="entry name" value="ThrRS_anticodon"/>
    <property type="match status" value="1"/>
</dbReference>
<dbReference type="CDD" id="cd00771">
    <property type="entry name" value="ThrRS_core"/>
    <property type="match status" value="1"/>
</dbReference>
<dbReference type="FunFam" id="3.10.20.30:FF:000005">
    <property type="entry name" value="Threonine--tRNA ligase"/>
    <property type="match status" value="1"/>
</dbReference>
<dbReference type="FunFam" id="3.30.54.20:FF:000002">
    <property type="entry name" value="Threonine--tRNA ligase"/>
    <property type="match status" value="1"/>
</dbReference>
<dbReference type="FunFam" id="3.30.930.10:FF:000002">
    <property type="entry name" value="Threonine--tRNA ligase"/>
    <property type="match status" value="1"/>
</dbReference>
<dbReference type="FunFam" id="3.40.50.800:FF:000001">
    <property type="entry name" value="Threonine--tRNA ligase"/>
    <property type="match status" value="1"/>
</dbReference>
<dbReference type="FunFam" id="3.30.980.10:FF:000005">
    <property type="entry name" value="Threonyl-tRNA synthetase, mitochondrial"/>
    <property type="match status" value="1"/>
</dbReference>
<dbReference type="Gene3D" id="3.10.20.30">
    <property type="match status" value="1"/>
</dbReference>
<dbReference type="Gene3D" id="3.30.54.20">
    <property type="match status" value="1"/>
</dbReference>
<dbReference type="Gene3D" id="3.40.50.800">
    <property type="entry name" value="Anticodon-binding domain"/>
    <property type="match status" value="1"/>
</dbReference>
<dbReference type="Gene3D" id="3.30.930.10">
    <property type="entry name" value="Bira Bifunctional Protein, Domain 2"/>
    <property type="match status" value="1"/>
</dbReference>
<dbReference type="Gene3D" id="3.30.980.10">
    <property type="entry name" value="Threonyl-trna Synthetase, Chain A, domain 2"/>
    <property type="match status" value="1"/>
</dbReference>
<dbReference type="HAMAP" id="MF_00184">
    <property type="entry name" value="Thr_tRNA_synth"/>
    <property type="match status" value="1"/>
</dbReference>
<dbReference type="InterPro" id="IPR002314">
    <property type="entry name" value="aa-tRNA-synt_IIb"/>
</dbReference>
<dbReference type="InterPro" id="IPR006195">
    <property type="entry name" value="aa-tRNA-synth_II"/>
</dbReference>
<dbReference type="InterPro" id="IPR045864">
    <property type="entry name" value="aa-tRNA-synth_II/BPL/LPL"/>
</dbReference>
<dbReference type="InterPro" id="IPR004154">
    <property type="entry name" value="Anticodon-bd"/>
</dbReference>
<dbReference type="InterPro" id="IPR036621">
    <property type="entry name" value="Anticodon-bd_dom_sf"/>
</dbReference>
<dbReference type="InterPro" id="IPR012675">
    <property type="entry name" value="Beta-grasp_dom_sf"/>
</dbReference>
<dbReference type="InterPro" id="IPR004095">
    <property type="entry name" value="TGS"/>
</dbReference>
<dbReference type="InterPro" id="IPR012676">
    <property type="entry name" value="TGS-like"/>
</dbReference>
<dbReference type="InterPro" id="IPR002320">
    <property type="entry name" value="Thr-tRNA-ligase_IIa"/>
</dbReference>
<dbReference type="InterPro" id="IPR018163">
    <property type="entry name" value="Thr/Ala-tRNA-synth_IIc_edit"/>
</dbReference>
<dbReference type="InterPro" id="IPR047246">
    <property type="entry name" value="ThrRS_anticodon"/>
</dbReference>
<dbReference type="InterPro" id="IPR033728">
    <property type="entry name" value="ThrRS_core"/>
</dbReference>
<dbReference type="InterPro" id="IPR012947">
    <property type="entry name" value="tRNA_SAD"/>
</dbReference>
<dbReference type="NCBIfam" id="TIGR00418">
    <property type="entry name" value="thrS"/>
    <property type="match status" value="1"/>
</dbReference>
<dbReference type="PANTHER" id="PTHR11451:SF44">
    <property type="entry name" value="THREONINE--TRNA LIGASE, CHLOROPLASTIC_MITOCHONDRIAL 2"/>
    <property type="match status" value="1"/>
</dbReference>
<dbReference type="PANTHER" id="PTHR11451">
    <property type="entry name" value="THREONINE-TRNA LIGASE"/>
    <property type="match status" value="1"/>
</dbReference>
<dbReference type="Pfam" id="PF03129">
    <property type="entry name" value="HGTP_anticodon"/>
    <property type="match status" value="1"/>
</dbReference>
<dbReference type="Pfam" id="PF02824">
    <property type="entry name" value="TGS"/>
    <property type="match status" value="1"/>
</dbReference>
<dbReference type="Pfam" id="PF00587">
    <property type="entry name" value="tRNA-synt_2b"/>
    <property type="match status" value="1"/>
</dbReference>
<dbReference type="Pfam" id="PF07973">
    <property type="entry name" value="tRNA_SAD"/>
    <property type="match status" value="1"/>
</dbReference>
<dbReference type="PRINTS" id="PR01047">
    <property type="entry name" value="TRNASYNTHTHR"/>
</dbReference>
<dbReference type="SMART" id="SM00863">
    <property type="entry name" value="tRNA_SAD"/>
    <property type="match status" value="1"/>
</dbReference>
<dbReference type="SUPFAM" id="SSF52954">
    <property type="entry name" value="Class II aaRS ABD-related"/>
    <property type="match status" value="1"/>
</dbReference>
<dbReference type="SUPFAM" id="SSF55681">
    <property type="entry name" value="Class II aaRS and biotin synthetases"/>
    <property type="match status" value="1"/>
</dbReference>
<dbReference type="SUPFAM" id="SSF81271">
    <property type="entry name" value="TGS-like"/>
    <property type="match status" value="1"/>
</dbReference>
<dbReference type="SUPFAM" id="SSF55186">
    <property type="entry name" value="ThrRS/AlaRS common domain"/>
    <property type="match status" value="1"/>
</dbReference>
<dbReference type="PROSITE" id="PS50862">
    <property type="entry name" value="AA_TRNA_LIGASE_II"/>
    <property type="match status" value="1"/>
</dbReference>
<dbReference type="PROSITE" id="PS51880">
    <property type="entry name" value="TGS"/>
    <property type="match status" value="1"/>
</dbReference>
<keyword id="KW-0030">Aminoacyl-tRNA synthetase</keyword>
<keyword id="KW-0067">ATP-binding</keyword>
<keyword id="KW-0963">Cytoplasm</keyword>
<keyword id="KW-0436">Ligase</keyword>
<keyword id="KW-0479">Metal-binding</keyword>
<keyword id="KW-0547">Nucleotide-binding</keyword>
<keyword id="KW-0648">Protein biosynthesis</keyword>
<keyword id="KW-1185">Reference proteome</keyword>
<keyword id="KW-0694">RNA-binding</keyword>
<keyword id="KW-0820">tRNA-binding</keyword>
<keyword id="KW-0862">Zinc</keyword>
<reference key="1">
    <citation type="journal article" date="2004" name="Proc. Natl. Acad. Sci. U.S.A.">
        <title>Genome sequence of the deep-sea gamma-proteobacterium Idiomarina loihiensis reveals amino acid fermentation as a source of carbon and energy.</title>
        <authorList>
            <person name="Hou S."/>
            <person name="Saw J.H."/>
            <person name="Lee K.S."/>
            <person name="Freitas T.A."/>
            <person name="Belisle C."/>
            <person name="Kawarabayasi Y."/>
            <person name="Donachie S.P."/>
            <person name="Pikina A."/>
            <person name="Galperin M.Y."/>
            <person name="Koonin E.V."/>
            <person name="Makarova K.S."/>
            <person name="Omelchenko M.V."/>
            <person name="Sorokin A."/>
            <person name="Wolf Y.I."/>
            <person name="Li Q.X."/>
            <person name="Keum Y.S."/>
            <person name="Campbell S."/>
            <person name="Denery J."/>
            <person name="Aizawa S."/>
            <person name="Shibata S."/>
            <person name="Malahoff A."/>
            <person name="Alam M."/>
        </authorList>
    </citation>
    <scope>NUCLEOTIDE SEQUENCE [LARGE SCALE GENOMIC DNA]</scope>
    <source>
        <strain>ATCC BAA-735 / DSM 15497 / L2-TR</strain>
    </source>
</reference>
<organism>
    <name type="scientific">Idiomarina loihiensis (strain ATCC BAA-735 / DSM 15497 / L2-TR)</name>
    <dbReference type="NCBI Taxonomy" id="283942"/>
    <lineage>
        <taxon>Bacteria</taxon>
        <taxon>Pseudomonadati</taxon>
        <taxon>Pseudomonadota</taxon>
        <taxon>Gammaproteobacteria</taxon>
        <taxon>Alteromonadales</taxon>
        <taxon>Idiomarinaceae</taxon>
        <taxon>Idiomarina</taxon>
    </lineage>
</organism>
<evidence type="ECO:0000255" key="1">
    <source>
        <dbReference type="HAMAP-Rule" id="MF_00184"/>
    </source>
</evidence>
<evidence type="ECO:0000255" key="2">
    <source>
        <dbReference type="PROSITE-ProRule" id="PRU01228"/>
    </source>
</evidence>
<gene>
    <name evidence="1" type="primary">thrS</name>
    <name type="ordered locus">IL1399</name>
</gene>
<proteinExistence type="inferred from homology"/>
<accession>Q5QYN4</accession>
<name>SYT_IDILO</name>